<keyword id="KW-1003">Cell membrane</keyword>
<keyword id="KW-0413">Isomerase</keyword>
<keyword id="KW-0456">Lyase</keyword>
<keyword id="KW-0472">Membrane</keyword>
<keyword id="KW-1185">Reference proteome</keyword>
<keyword id="KW-0677">Repeat</keyword>
<dbReference type="EC" id="4.2.1.129"/>
<dbReference type="EC" id="5.4.99.17"/>
<dbReference type="EMBL" id="X86552">
    <property type="protein sequence ID" value="CAA60250.1"/>
    <property type="molecule type" value="Genomic_DNA"/>
</dbReference>
<dbReference type="EMBL" id="BA000040">
    <property type="protein sequence ID" value="BAC48269.1"/>
    <property type="molecule type" value="Genomic_DNA"/>
</dbReference>
<dbReference type="RefSeq" id="NP_769644.1">
    <property type="nucleotide sequence ID" value="NC_004463.1"/>
</dbReference>
<dbReference type="RefSeq" id="WP_011085788.1">
    <property type="nucleotide sequence ID" value="NC_004463.1"/>
</dbReference>
<dbReference type="SMR" id="P54924"/>
<dbReference type="STRING" id="224911.AAV28_12035"/>
<dbReference type="EnsemblBacteria" id="BAC48269">
    <property type="protein sequence ID" value="BAC48269"/>
    <property type="gene ID" value="BAC48269"/>
</dbReference>
<dbReference type="GeneID" id="46490041"/>
<dbReference type="KEGG" id="bja:blr3004"/>
<dbReference type="PATRIC" id="fig|224911.44.peg.2630"/>
<dbReference type="eggNOG" id="COG1657">
    <property type="taxonomic scope" value="Bacteria"/>
</dbReference>
<dbReference type="HOGENOM" id="CLU_019345_0_0_5"/>
<dbReference type="InParanoid" id="P54924"/>
<dbReference type="OrthoDB" id="9758578at2"/>
<dbReference type="PhylomeDB" id="P54924"/>
<dbReference type="UniPathway" id="UPA00337"/>
<dbReference type="Proteomes" id="UP000002526">
    <property type="component" value="Chromosome"/>
</dbReference>
<dbReference type="GO" id="GO:0005811">
    <property type="term" value="C:lipid droplet"/>
    <property type="evidence" value="ECO:0007669"/>
    <property type="project" value="InterPro"/>
</dbReference>
<dbReference type="GO" id="GO:0005886">
    <property type="term" value="C:plasma membrane"/>
    <property type="evidence" value="ECO:0007669"/>
    <property type="project" value="UniProtKB-SubCell"/>
</dbReference>
<dbReference type="GO" id="GO:0016829">
    <property type="term" value="F:lyase activity"/>
    <property type="evidence" value="ECO:0007669"/>
    <property type="project" value="UniProtKB-KW"/>
</dbReference>
<dbReference type="GO" id="GO:0051007">
    <property type="term" value="F:squalene-hopene cyclase activity"/>
    <property type="evidence" value="ECO:0007669"/>
    <property type="project" value="UniProtKB-EC"/>
</dbReference>
<dbReference type="GO" id="GO:0016104">
    <property type="term" value="P:triterpenoid biosynthetic process"/>
    <property type="evidence" value="ECO:0007669"/>
    <property type="project" value="InterPro"/>
</dbReference>
<dbReference type="CDD" id="cd02892">
    <property type="entry name" value="SQCY_1"/>
    <property type="match status" value="1"/>
</dbReference>
<dbReference type="Gene3D" id="1.50.10.20">
    <property type="match status" value="2"/>
</dbReference>
<dbReference type="InterPro" id="IPR006400">
    <property type="entry name" value="Hopene-cyclase"/>
</dbReference>
<dbReference type="InterPro" id="IPR032696">
    <property type="entry name" value="SQ_cyclase_C"/>
</dbReference>
<dbReference type="InterPro" id="IPR032697">
    <property type="entry name" value="SQ_cyclase_N"/>
</dbReference>
<dbReference type="InterPro" id="IPR018333">
    <property type="entry name" value="Squalene_cyclase"/>
</dbReference>
<dbReference type="InterPro" id="IPR002365">
    <property type="entry name" value="Terpene_synthase_CS"/>
</dbReference>
<dbReference type="InterPro" id="IPR008930">
    <property type="entry name" value="Terpenoid_cyclase/PrenylTrfase"/>
</dbReference>
<dbReference type="NCBIfam" id="TIGR01507">
    <property type="entry name" value="hopene_cyclase"/>
    <property type="match status" value="1"/>
</dbReference>
<dbReference type="NCBIfam" id="TIGR01787">
    <property type="entry name" value="squalene_cyclas"/>
    <property type="match status" value="1"/>
</dbReference>
<dbReference type="PANTHER" id="PTHR11764:SF20">
    <property type="entry name" value="LANOSTEROL SYNTHASE"/>
    <property type="match status" value="1"/>
</dbReference>
<dbReference type="PANTHER" id="PTHR11764">
    <property type="entry name" value="TERPENE CYCLASE/MUTASE FAMILY MEMBER"/>
    <property type="match status" value="1"/>
</dbReference>
<dbReference type="Pfam" id="PF13243">
    <property type="entry name" value="SQHop_cyclase_C"/>
    <property type="match status" value="1"/>
</dbReference>
<dbReference type="Pfam" id="PF13249">
    <property type="entry name" value="SQHop_cyclase_N"/>
    <property type="match status" value="1"/>
</dbReference>
<dbReference type="SFLD" id="SFLDG01016">
    <property type="entry name" value="Prenyltransferase_Like_2"/>
    <property type="match status" value="1"/>
</dbReference>
<dbReference type="SUPFAM" id="SSF48239">
    <property type="entry name" value="Terpenoid cyclases/Protein prenyltransferases"/>
    <property type="match status" value="2"/>
</dbReference>
<dbReference type="PROSITE" id="PS01074">
    <property type="entry name" value="TERPENE_SYNTHASES"/>
    <property type="match status" value="1"/>
</dbReference>
<reference key="1">
    <citation type="submission" date="1995-10" db="EMBL/GenBank/DDBJ databases">
        <authorList>
            <person name="Perzl M."/>
            <person name="Poralla K."/>
        </authorList>
    </citation>
    <scope>NUCLEOTIDE SEQUENCE [GENOMIC DNA]</scope>
</reference>
<reference key="2">
    <citation type="journal article" date="2002" name="DNA Res.">
        <title>Complete genomic sequence of nitrogen-fixing symbiotic bacterium Bradyrhizobium japonicum USDA110.</title>
        <authorList>
            <person name="Kaneko T."/>
            <person name="Nakamura Y."/>
            <person name="Sato S."/>
            <person name="Minamisawa K."/>
            <person name="Uchiumi T."/>
            <person name="Sasamoto S."/>
            <person name="Watanabe A."/>
            <person name="Idesawa K."/>
            <person name="Iriguchi M."/>
            <person name="Kawashima K."/>
            <person name="Kohara M."/>
            <person name="Matsumoto M."/>
            <person name="Shimpo S."/>
            <person name="Tsuruoka H."/>
            <person name="Wada T."/>
            <person name="Yamada M."/>
            <person name="Tabata S."/>
        </authorList>
    </citation>
    <scope>NUCLEOTIDE SEQUENCE [LARGE SCALE GENOMIC DNA]</scope>
    <source>
        <strain>JCM 10833 / BCRC 13528 / IAM 13628 / NBRC 14792 / USDA 110</strain>
    </source>
</reference>
<protein>
    <recommendedName>
        <fullName>Squalene--hopene cyclase</fullName>
        <ecNumber>4.2.1.129</ecNumber>
        <ecNumber>5.4.99.17</ecNumber>
    </recommendedName>
    <alternativeName>
        <fullName>Squalene--hopanol cyclase</fullName>
    </alternativeName>
</protein>
<accession>P54924</accession>
<organism>
    <name type="scientific">Bradyrhizobium diazoefficiens (strain JCM 10833 / BCRC 13528 / IAM 13628 / NBRC 14792 / USDA 110)</name>
    <dbReference type="NCBI Taxonomy" id="224911"/>
    <lineage>
        <taxon>Bacteria</taxon>
        <taxon>Pseudomonadati</taxon>
        <taxon>Pseudomonadota</taxon>
        <taxon>Alphaproteobacteria</taxon>
        <taxon>Hyphomicrobiales</taxon>
        <taxon>Nitrobacteraceae</taxon>
        <taxon>Bradyrhizobium</taxon>
    </lineage>
</organism>
<gene>
    <name type="primary">shc</name>
    <name type="ordered locus">blr3004</name>
</gene>
<comment type="function">
    <text>Catalyzes the cyclization of squalene into hopene.</text>
</comment>
<comment type="catalytic activity">
    <reaction>
        <text>squalene = hop-22(29)-ene</text>
        <dbReference type="Rhea" id="RHEA:17637"/>
        <dbReference type="ChEBI" id="CHEBI:4648"/>
        <dbReference type="ChEBI" id="CHEBI:15440"/>
        <dbReference type="EC" id="5.4.99.17"/>
    </reaction>
</comment>
<comment type="catalytic activity">
    <reaction>
        <text>squalene + H2O = hopan-22-ol</text>
        <dbReference type="Rhea" id="RHEA:16561"/>
        <dbReference type="ChEBI" id="CHEBI:15377"/>
        <dbReference type="ChEBI" id="CHEBI:15440"/>
        <dbReference type="ChEBI" id="CHEBI:36484"/>
        <dbReference type="EC" id="4.2.1.129"/>
    </reaction>
</comment>
<comment type="pathway">
    <text>Secondary metabolite biosynthesis; hopanoid biosynthesis.</text>
</comment>
<comment type="subcellular location">
    <subcellularLocation>
        <location evidence="1">Cell membrane</location>
        <topology evidence="1">Peripheral membrane protein</topology>
    </subcellularLocation>
</comment>
<comment type="similarity">
    <text evidence="3">Belongs to the terpene cyclase/mutase family.</text>
</comment>
<feature type="chain" id="PRO_0000072651" description="Squalene--hopene cyclase">
    <location>
        <begin position="1"/>
        <end position="660"/>
    </location>
</feature>
<feature type="repeat" description="PFTB 1">
    <location>
        <begin position="73"/>
        <end position="114"/>
    </location>
</feature>
<feature type="repeat" description="PFTB 2">
    <location>
        <begin position="419"/>
        <end position="460"/>
    </location>
</feature>
<feature type="repeat" description="PFTB 3">
    <location>
        <begin position="536"/>
        <end position="586"/>
    </location>
</feature>
<feature type="active site" description="Proton donor" evidence="2">
    <location>
        <position position="394"/>
    </location>
</feature>
<feature type="sequence conflict" description="In Ref. 1." evidence="3" ref="1">
    <original>TARE</original>
    <variation>PP</variation>
    <location>
        <begin position="7"/>
        <end position="10"/>
    </location>
</feature>
<feature type="sequence conflict" description="In Ref. 1; CAA60250." evidence="3" ref="1">
    <original>V</original>
    <variation>G</variation>
    <location>
        <position position="347"/>
    </location>
</feature>
<feature type="sequence conflict" description="In Ref. 1; CAA60250." evidence="3" ref="1">
    <original>A</original>
    <variation>T</variation>
    <location>
        <position position="557"/>
    </location>
</feature>
<feature type="sequence conflict" description="In Ref. 1; CAA60250." evidence="3" ref="1">
    <original>A</original>
    <variation>G</variation>
    <location>
        <position position="641"/>
    </location>
</feature>
<proteinExistence type="inferred from homology"/>
<sequence>MDSVNATAREAKESKISESEILESSIASATQGVLGFQQSDGHWVFELEADCTIPAEYVLLRHYLAEPVDTVLEAKIGNYLRRVQGAHGGWPLVHDGEFDMSASVKAYFALKMIGDSIDAPHMVRAREAIHARGGAIHSNVFTRFMLAMFGIVTWRAVPVLPIEIMLLPFWSPFHINKISYWARTTMVPLMVIAALKPRAKNPKGVGIDELFLQDPRSIGMTAKAPHQSMAWFLLFRSLDAILRVIEPLFPKSLRKRAIDTALAFSEERLNGEDGMGAIYPPMANLVMMYDALGKDENYPPRAVTRRGIDKLLVIGDDEAYCQPCVSPVWDTTLTAHALLEAGGDKAVPAAKHGLDWLIPKQELEVKGDWAVKRPDVRPGGWAFQYNNAYYPDLDDTAVVVMSMDRMRREHGVTGYDSAIDRGREWIEGMQSDDGGWAAFDVNNLEYYLNNIPFSDHGALLDPPTEDVTARCVSMLAQLGETAKTSKHVADGVAYLRKTQHPEGSWYGRWGMNFIYGTWSVLCALNMAGVRHDDPMIRKAADWLASIQNKDGGWGEDAVSYRLDYKGWEAAPSTASQTAWALLALMAAGEVDHPAVARGVEYLIATQNEKGLWDEQRYTATGFPRVFYLRYHGYSKFFPLWALARYRNLRNTNSRVVGVGM</sequence>
<evidence type="ECO:0000250" key="1"/>
<evidence type="ECO:0000250" key="2">
    <source>
        <dbReference type="UniProtKB" id="P48449"/>
    </source>
</evidence>
<evidence type="ECO:0000305" key="3"/>
<name>SQHC_BRADU</name>